<proteinExistence type="inferred from homology"/>
<dbReference type="EMBL" id="CP000921">
    <property type="protein sequence ID" value="ACO22594.1"/>
    <property type="molecule type" value="Genomic_DNA"/>
</dbReference>
<dbReference type="RefSeq" id="WP_000065994.1">
    <property type="nucleotide sequence ID" value="NC_012469.1"/>
</dbReference>
<dbReference type="SMR" id="C1CQY3"/>
<dbReference type="KEGG" id="snt:SPT_0901"/>
<dbReference type="HOGENOM" id="CLU_140243_2_0_9"/>
<dbReference type="Gene3D" id="1.20.1500.10">
    <property type="entry name" value="YheA/YmcA-like"/>
    <property type="match status" value="1"/>
</dbReference>
<dbReference type="HAMAP" id="MF_01526">
    <property type="entry name" value="UPF0342"/>
    <property type="match status" value="1"/>
</dbReference>
<dbReference type="InterPro" id="IPR010368">
    <property type="entry name" value="Com_YlbF"/>
</dbReference>
<dbReference type="InterPro" id="IPR023378">
    <property type="entry name" value="YheA/YmcA-like_dom_sf"/>
</dbReference>
<dbReference type="NCBIfam" id="NF010209">
    <property type="entry name" value="PRK13676.1-1"/>
    <property type="match status" value="1"/>
</dbReference>
<dbReference type="Pfam" id="PF06133">
    <property type="entry name" value="Com_YlbF"/>
    <property type="match status" value="1"/>
</dbReference>
<dbReference type="SUPFAM" id="SSF158622">
    <property type="entry name" value="YheA/YmcA-like"/>
    <property type="match status" value="1"/>
</dbReference>
<organism>
    <name type="scientific">Streptococcus pneumoniae (strain Taiwan19F-14)</name>
    <dbReference type="NCBI Taxonomy" id="487213"/>
    <lineage>
        <taxon>Bacteria</taxon>
        <taxon>Bacillati</taxon>
        <taxon>Bacillota</taxon>
        <taxon>Bacilli</taxon>
        <taxon>Lactobacillales</taxon>
        <taxon>Streptococcaceae</taxon>
        <taxon>Streptococcus</taxon>
    </lineage>
</organism>
<protein>
    <recommendedName>
        <fullName evidence="1">UPF0342 protein SPT_0901</fullName>
    </recommendedName>
</protein>
<feature type="chain" id="PRO_1000185149" description="UPF0342 protein SPT_0901">
    <location>
        <begin position="1"/>
        <end position="112"/>
    </location>
</feature>
<reference key="1">
    <citation type="journal article" date="2010" name="Genome Biol.">
        <title>Structure and dynamics of the pan-genome of Streptococcus pneumoniae and closely related species.</title>
        <authorList>
            <person name="Donati C."/>
            <person name="Hiller N.L."/>
            <person name="Tettelin H."/>
            <person name="Muzzi A."/>
            <person name="Croucher N.J."/>
            <person name="Angiuoli S.V."/>
            <person name="Oggioni M."/>
            <person name="Dunning Hotopp J.C."/>
            <person name="Hu F.Z."/>
            <person name="Riley D.R."/>
            <person name="Covacci A."/>
            <person name="Mitchell T.J."/>
            <person name="Bentley S.D."/>
            <person name="Kilian M."/>
            <person name="Ehrlich G.D."/>
            <person name="Rappuoli R."/>
            <person name="Moxon E.R."/>
            <person name="Masignani V."/>
        </authorList>
    </citation>
    <scope>NUCLEOTIDE SEQUENCE [LARGE SCALE GENOMIC DNA]</scope>
    <source>
        <strain>Taiwan19F-14</strain>
    </source>
</reference>
<comment type="similarity">
    <text evidence="1">Belongs to the UPF0342 family.</text>
</comment>
<evidence type="ECO:0000255" key="1">
    <source>
        <dbReference type="HAMAP-Rule" id="MF_01526"/>
    </source>
</evidence>
<gene>
    <name type="ordered locus">SPT_0901</name>
</gene>
<name>Y901_STRZT</name>
<accession>C1CQY3</accession>
<sequence length="112" mass="12501">MSNIYDSANELSRGLRGLPEYKTVKAAKDAIAADAEASKIFTEYLAFQEEIQKLAQTGQMPDASFQAKMEGFGKQIQGNSLLSEFFTKQQQLAIYLSDIEKIVFEPVSELLK</sequence>